<evidence type="ECO:0000255" key="1">
    <source>
        <dbReference type="HAMAP-Rule" id="MF_00114"/>
    </source>
</evidence>
<name>DEOC_EXIS2</name>
<feature type="chain" id="PRO_1000094845" description="Deoxyribose-phosphate aldolase">
    <location>
        <begin position="1"/>
        <end position="221"/>
    </location>
</feature>
<feature type="active site" description="Proton donor/acceptor" evidence="1">
    <location>
        <position position="90"/>
    </location>
</feature>
<feature type="active site" description="Schiff-base intermediate with acetaldehyde" evidence="1">
    <location>
        <position position="152"/>
    </location>
</feature>
<feature type="active site" description="Proton donor/acceptor" evidence="1">
    <location>
        <position position="181"/>
    </location>
</feature>
<protein>
    <recommendedName>
        <fullName evidence="1">Deoxyribose-phosphate aldolase</fullName>
        <shortName evidence="1">DERA</shortName>
        <ecNumber evidence="1">4.1.2.4</ecNumber>
    </recommendedName>
    <alternativeName>
        <fullName evidence="1">2-deoxy-D-ribose 5-phosphate aldolase</fullName>
    </alternativeName>
    <alternativeName>
        <fullName evidence="1">Phosphodeoxyriboaldolase</fullName>
        <shortName evidence="1">Deoxyriboaldolase</shortName>
    </alternativeName>
</protein>
<keyword id="KW-0963">Cytoplasm</keyword>
<keyword id="KW-0456">Lyase</keyword>
<keyword id="KW-1185">Reference proteome</keyword>
<keyword id="KW-0704">Schiff base</keyword>
<comment type="function">
    <text evidence="1">Catalyzes a reversible aldol reaction between acetaldehyde and D-glyceraldehyde 3-phosphate to generate 2-deoxy-D-ribose 5-phosphate.</text>
</comment>
<comment type="catalytic activity">
    <reaction evidence="1">
        <text>2-deoxy-D-ribose 5-phosphate = D-glyceraldehyde 3-phosphate + acetaldehyde</text>
        <dbReference type="Rhea" id="RHEA:12821"/>
        <dbReference type="ChEBI" id="CHEBI:15343"/>
        <dbReference type="ChEBI" id="CHEBI:59776"/>
        <dbReference type="ChEBI" id="CHEBI:62877"/>
        <dbReference type="EC" id="4.1.2.4"/>
    </reaction>
</comment>
<comment type="pathway">
    <text evidence="1">Carbohydrate degradation; 2-deoxy-D-ribose 1-phosphate degradation; D-glyceraldehyde 3-phosphate and acetaldehyde from 2-deoxy-alpha-D-ribose 1-phosphate: step 2/2.</text>
</comment>
<comment type="subcellular location">
    <subcellularLocation>
        <location evidence="1">Cytoplasm</location>
    </subcellularLocation>
</comment>
<comment type="similarity">
    <text evidence="1">Belongs to the DeoC/FbaB aldolase family. DeoC type 1 subfamily.</text>
</comment>
<reference key="1">
    <citation type="submission" date="2008-04" db="EMBL/GenBank/DDBJ databases">
        <title>Complete sequence of chromosome of Exiguobacterium sibiricum 255-15.</title>
        <authorList>
            <consortium name="US DOE Joint Genome Institute"/>
            <person name="Copeland A."/>
            <person name="Lucas S."/>
            <person name="Lapidus A."/>
            <person name="Glavina del Rio T."/>
            <person name="Dalin E."/>
            <person name="Tice H."/>
            <person name="Bruce D."/>
            <person name="Goodwin L."/>
            <person name="Pitluck S."/>
            <person name="Kiss H."/>
            <person name="Chertkov O."/>
            <person name="Monk C."/>
            <person name="Brettin T."/>
            <person name="Detter J.C."/>
            <person name="Han C."/>
            <person name="Kuske C.R."/>
            <person name="Schmutz J."/>
            <person name="Larimer F."/>
            <person name="Land M."/>
            <person name="Hauser L."/>
            <person name="Kyrpides N."/>
            <person name="Mikhailova N."/>
            <person name="Vishnivetskaya T."/>
            <person name="Rodrigues D.F."/>
            <person name="Gilichinsky D."/>
            <person name="Tiedje J."/>
            <person name="Richardson P."/>
        </authorList>
    </citation>
    <scope>NUCLEOTIDE SEQUENCE [LARGE SCALE GENOMIC DNA]</scope>
    <source>
        <strain>DSM 17290 / CCUG 55495 / CIP 109462 / JCM 13490 / 255-15</strain>
    </source>
</reference>
<accession>B1YKT7</accession>
<gene>
    <name evidence="1" type="primary">deoC</name>
    <name type="ordered locus">Exig_0789</name>
</gene>
<organism>
    <name type="scientific">Exiguobacterium sibiricum (strain DSM 17290 / CCUG 55495 / CIP 109462 / JCM 13490 / 255-15)</name>
    <dbReference type="NCBI Taxonomy" id="262543"/>
    <lineage>
        <taxon>Bacteria</taxon>
        <taxon>Bacillati</taxon>
        <taxon>Bacillota</taxon>
        <taxon>Bacilli</taxon>
        <taxon>Bacillales</taxon>
        <taxon>Bacillales Family XII. Incertae Sedis</taxon>
        <taxon>Exiguobacterium</taxon>
    </lineage>
</organism>
<dbReference type="EC" id="4.1.2.4" evidence="1"/>
<dbReference type="EMBL" id="CP001022">
    <property type="protein sequence ID" value="ACB60270.1"/>
    <property type="molecule type" value="Genomic_DNA"/>
</dbReference>
<dbReference type="RefSeq" id="WP_012369694.1">
    <property type="nucleotide sequence ID" value="NC_010556.1"/>
</dbReference>
<dbReference type="SMR" id="B1YKT7"/>
<dbReference type="STRING" id="262543.Exig_0789"/>
<dbReference type="KEGG" id="esi:Exig_0789"/>
<dbReference type="eggNOG" id="COG0274">
    <property type="taxonomic scope" value="Bacteria"/>
</dbReference>
<dbReference type="HOGENOM" id="CLU_053595_0_1_9"/>
<dbReference type="OrthoDB" id="9778711at2"/>
<dbReference type="UniPathway" id="UPA00002">
    <property type="reaction ID" value="UER00468"/>
</dbReference>
<dbReference type="Proteomes" id="UP000001681">
    <property type="component" value="Chromosome"/>
</dbReference>
<dbReference type="GO" id="GO:0005737">
    <property type="term" value="C:cytoplasm"/>
    <property type="evidence" value="ECO:0007669"/>
    <property type="project" value="UniProtKB-SubCell"/>
</dbReference>
<dbReference type="GO" id="GO:0004139">
    <property type="term" value="F:deoxyribose-phosphate aldolase activity"/>
    <property type="evidence" value="ECO:0007669"/>
    <property type="project" value="UniProtKB-UniRule"/>
</dbReference>
<dbReference type="GO" id="GO:0006018">
    <property type="term" value="P:2-deoxyribose 1-phosphate catabolic process"/>
    <property type="evidence" value="ECO:0007669"/>
    <property type="project" value="UniProtKB-UniRule"/>
</dbReference>
<dbReference type="GO" id="GO:0016052">
    <property type="term" value="P:carbohydrate catabolic process"/>
    <property type="evidence" value="ECO:0007669"/>
    <property type="project" value="TreeGrafter"/>
</dbReference>
<dbReference type="GO" id="GO:0009264">
    <property type="term" value="P:deoxyribonucleotide catabolic process"/>
    <property type="evidence" value="ECO:0007669"/>
    <property type="project" value="InterPro"/>
</dbReference>
<dbReference type="CDD" id="cd00959">
    <property type="entry name" value="DeoC"/>
    <property type="match status" value="1"/>
</dbReference>
<dbReference type="FunFam" id="3.20.20.70:FF:000044">
    <property type="entry name" value="Deoxyribose-phosphate aldolase"/>
    <property type="match status" value="1"/>
</dbReference>
<dbReference type="Gene3D" id="3.20.20.70">
    <property type="entry name" value="Aldolase class I"/>
    <property type="match status" value="1"/>
</dbReference>
<dbReference type="HAMAP" id="MF_00114">
    <property type="entry name" value="DeoC_type1"/>
    <property type="match status" value="1"/>
</dbReference>
<dbReference type="InterPro" id="IPR013785">
    <property type="entry name" value="Aldolase_TIM"/>
</dbReference>
<dbReference type="InterPro" id="IPR011343">
    <property type="entry name" value="DeoC"/>
</dbReference>
<dbReference type="InterPro" id="IPR002915">
    <property type="entry name" value="DeoC/FbaB/LacD_aldolase"/>
</dbReference>
<dbReference type="InterPro" id="IPR028581">
    <property type="entry name" value="DeoC_typeI"/>
</dbReference>
<dbReference type="NCBIfam" id="TIGR00126">
    <property type="entry name" value="deoC"/>
    <property type="match status" value="1"/>
</dbReference>
<dbReference type="PANTHER" id="PTHR10889">
    <property type="entry name" value="DEOXYRIBOSE-PHOSPHATE ALDOLASE"/>
    <property type="match status" value="1"/>
</dbReference>
<dbReference type="PANTHER" id="PTHR10889:SF1">
    <property type="entry name" value="DEOXYRIBOSE-PHOSPHATE ALDOLASE"/>
    <property type="match status" value="1"/>
</dbReference>
<dbReference type="Pfam" id="PF01791">
    <property type="entry name" value="DeoC"/>
    <property type="match status" value="1"/>
</dbReference>
<dbReference type="PIRSF" id="PIRSF001357">
    <property type="entry name" value="DeoC"/>
    <property type="match status" value="1"/>
</dbReference>
<dbReference type="SMART" id="SM01133">
    <property type="entry name" value="DeoC"/>
    <property type="match status" value="1"/>
</dbReference>
<dbReference type="SUPFAM" id="SSF51569">
    <property type="entry name" value="Aldolase"/>
    <property type="match status" value="1"/>
</dbReference>
<sequence>MNLAGMIDHTALKAETSRAQIETLCKEALEYKFASVCVNPTNVALAAELLKSDDAVKVCTVIGFPLGANTPEVKAFETQDAIKNGATEIDMVLNIGALKDGDLSLVERDIRAVVEAANGTLVKVIFENCLLTKEEIKTAAELSVKAGADFVKTSTGFSTGGATVEDIRLMRETVGPDIGVKASGGVRDFEGAKAMIDAGATRIGASAGIAIVTGGTSDSDY</sequence>
<proteinExistence type="inferred from homology"/>